<protein>
    <recommendedName>
        <fullName>Superficial pseudohyphal growth protein 1</fullName>
    </recommendedName>
</protein>
<comment type="function">
    <text evidence="3">Probable transcription factor required for superficial pseudohyphal development in response to nitrogen starvation.</text>
</comment>
<comment type="subcellular location">
    <subcellularLocation>
        <location evidence="2 3">Nucleus</location>
    </subcellularLocation>
</comment>
<organism>
    <name type="scientific">Saccharomyces cerevisiae (strain ATCC 204508 / S288c)</name>
    <name type="common">Baker's yeast</name>
    <dbReference type="NCBI Taxonomy" id="559292"/>
    <lineage>
        <taxon>Eukaryota</taxon>
        <taxon>Fungi</taxon>
        <taxon>Dikarya</taxon>
        <taxon>Ascomycota</taxon>
        <taxon>Saccharomycotina</taxon>
        <taxon>Saccharomycetes</taxon>
        <taxon>Saccharomycetales</taxon>
        <taxon>Saccharomycetaceae</taxon>
        <taxon>Saccharomyces</taxon>
    </lineage>
</organism>
<name>SFG1_YEAST</name>
<feature type="chain" id="PRO_0000269646" description="Superficial pseudohyphal growth protein 1">
    <location>
        <begin position="1"/>
        <end position="346"/>
    </location>
</feature>
<feature type="region of interest" description="Disordered" evidence="1">
    <location>
        <begin position="289"/>
        <end position="308"/>
    </location>
</feature>
<feature type="compositionally biased region" description="Acidic residues" evidence="1">
    <location>
        <begin position="291"/>
        <end position="305"/>
    </location>
</feature>
<keyword id="KW-0539">Nucleus</keyword>
<keyword id="KW-1185">Reference proteome</keyword>
<keyword id="KW-0804">Transcription</keyword>
<keyword id="KW-0805">Transcription regulation</keyword>
<evidence type="ECO:0000256" key="1">
    <source>
        <dbReference type="SAM" id="MobiDB-lite"/>
    </source>
</evidence>
<evidence type="ECO:0000269" key="2">
    <source>
    </source>
</evidence>
<evidence type="ECO:0000269" key="3">
    <source>
    </source>
</evidence>
<dbReference type="EMBL" id="X90565">
    <property type="protein sequence ID" value="CAA62170.1"/>
    <property type="molecule type" value="Genomic_DNA"/>
</dbReference>
<dbReference type="EMBL" id="Z75223">
    <property type="protein sequence ID" value="CAA99635.1"/>
    <property type="molecule type" value="Genomic_DNA"/>
</dbReference>
<dbReference type="EMBL" id="BK006948">
    <property type="protein sequence ID" value="DAA11079.1"/>
    <property type="molecule type" value="Genomic_DNA"/>
</dbReference>
<dbReference type="PIR" id="S58326">
    <property type="entry name" value="S58326"/>
</dbReference>
<dbReference type="RefSeq" id="NP_014960.1">
    <property type="nucleotide sequence ID" value="NM_001183735.1"/>
</dbReference>
<dbReference type="BioGRID" id="34702">
    <property type="interactions" value="61"/>
</dbReference>
<dbReference type="DIP" id="DIP-1344N"/>
<dbReference type="FunCoup" id="Q12507">
    <property type="interactions" value="111"/>
</dbReference>
<dbReference type="IntAct" id="Q12507">
    <property type="interactions" value="3"/>
</dbReference>
<dbReference type="MINT" id="Q12507"/>
<dbReference type="STRING" id="4932.YOR315W"/>
<dbReference type="GlyGen" id="Q12507">
    <property type="glycosylation" value="1 site"/>
</dbReference>
<dbReference type="iPTMnet" id="Q12507"/>
<dbReference type="PaxDb" id="4932-YOR315W"/>
<dbReference type="PeptideAtlas" id="Q12507"/>
<dbReference type="EnsemblFungi" id="YOR315W_mRNA">
    <property type="protein sequence ID" value="YOR315W"/>
    <property type="gene ID" value="YOR315W"/>
</dbReference>
<dbReference type="GeneID" id="854493"/>
<dbReference type="KEGG" id="sce:YOR315W"/>
<dbReference type="AGR" id="SGD:S000005842"/>
<dbReference type="SGD" id="S000005842">
    <property type="gene designation" value="SFG1"/>
</dbReference>
<dbReference type="VEuPathDB" id="FungiDB:YOR315W"/>
<dbReference type="eggNOG" id="ENOG502SABW">
    <property type="taxonomic scope" value="Eukaryota"/>
</dbReference>
<dbReference type="HOGENOM" id="CLU_070628_0_0_1"/>
<dbReference type="InParanoid" id="Q12507"/>
<dbReference type="OMA" id="WERITIP"/>
<dbReference type="OrthoDB" id="3981230at2759"/>
<dbReference type="BioCyc" id="YEAST:G3O-33797-MONOMER"/>
<dbReference type="BioGRID-ORCS" id="854493">
    <property type="hits" value="2 hits in 10 CRISPR screens"/>
</dbReference>
<dbReference type="PRO" id="PR:Q12507"/>
<dbReference type="Proteomes" id="UP000002311">
    <property type="component" value="Chromosome XV"/>
</dbReference>
<dbReference type="RNAct" id="Q12507">
    <property type="molecule type" value="protein"/>
</dbReference>
<dbReference type="GO" id="GO:0005737">
    <property type="term" value="C:cytoplasm"/>
    <property type="evidence" value="ECO:0007005"/>
    <property type="project" value="SGD"/>
</dbReference>
<dbReference type="GO" id="GO:0005634">
    <property type="term" value="C:nucleus"/>
    <property type="evidence" value="ECO:0000314"/>
    <property type="project" value="SGD"/>
</dbReference>
<dbReference type="GO" id="GO:0098609">
    <property type="term" value="P:cell-cell adhesion"/>
    <property type="evidence" value="ECO:0000315"/>
    <property type="project" value="SGD"/>
</dbReference>
<dbReference type="GO" id="GO:0036267">
    <property type="term" value="P:invasive filamentous growth"/>
    <property type="evidence" value="ECO:0000315"/>
    <property type="project" value="SGD"/>
</dbReference>
<dbReference type="GO" id="GO:0000278">
    <property type="term" value="P:mitotic cell cycle"/>
    <property type="evidence" value="ECO:0000315"/>
    <property type="project" value="SGD"/>
</dbReference>
<dbReference type="GO" id="GO:0090033">
    <property type="term" value="P:positive regulation of filamentous growth"/>
    <property type="evidence" value="ECO:0000315"/>
    <property type="project" value="SGD"/>
</dbReference>
<dbReference type="GO" id="GO:0007124">
    <property type="term" value="P:pseudohyphal growth"/>
    <property type="evidence" value="ECO:0000315"/>
    <property type="project" value="SGD"/>
</dbReference>
<accession>Q12507</accession>
<accession>D6W313</accession>
<reference key="1">
    <citation type="journal article" date="1996" name="Yeast">
        <title>Sequencing of a 35.71 kb DNA segment on the right arm of yeast chromosome XV reveals regions of similarity to chromosomes I and XIII.</title>
        <authorList>
            <person name="Pearson B.M."/>
            <person name="Hernando Y."/>
            <person name="Payne J."/>
            <person name="Wolf S.S."/>
            <person name="Kalogeropoulos A."/>
            <person name="Schweizer M."/>
        </authorList>
    </citation>
    <scope>NUCLEOTIDE SEQUENCE [GENOMIC DNA]</scope>
    <source>
        <strain>ATCC 96604 / S288c / FY1679</strain>
    </source>
</reference>
<reference key="2">
    <citation type="journal article" date="1997" name="Nature">
        <title>The nucleotide sequence of Saccharomyces cerevisiae chromosome XV.</title>
        <authorList>
            <person name="Dujon B."/>
            <person name="Albermann K."/>
            <person name="Aldea M."/>
            <person name="Alexandraki D."/>
            <person name="Ansorge W."/>
            <person name="Arino J."/>
            <person name="Benes V."/>
            <person name="Bohn C."/>
            <person name="Bolotin-Fukuhara M."/>
            <person name="Bordonne R."/>
            <person name="Boyer J."/>
            <person name="Camasses A."/>
            <person name="Casamayor A."/>
            <person name="Casas C."/>
            <person name="Cheret G."/>
            <person name="Cziepluch C."/>
            <person name="Daignan-Fornier B."/>
            <person name="Dang V.-D."/>
            <person name="de Haan M."/>
            <person name="Delius H."/>
            <person name="Durand P."/>
            <person name="Fairhead C."/>
            <person name="Feldmann H."/>
            <person name="Gaillon L."/>
            <person name="Galisson F."/>
            <person name="Gamo F.-J."/>
            <person name="Gancedo C."/>
            <person name="Goffeau A."/>
            <person name="Goulding S.E."/>
            <person name="Grivell L.A."/>
            <person name="Habbig B."/>
            <person name="Hand N.J."/>
            <person name="Hani J."/>
            <person name="Hattenhorst U."/>
            <person name="Hebling U."/>
            <person name="Hernando Y."/>
            <person name="Herrero E."/>
            <person name="Heumann K."/>
            <person name="Hiesel R."/>
            <person name="Hilger F."/>
            <person name="Hofmann B."/>
            <person name="Hollenberg C.P."/>
            <person name="Hughes B."/>
            <person name="Jauniaux J.-C."/>
            <person name="Kalogeropoulos A."/>
            <person name="Katsoulou C."/>
            <person name="Kordes E."/>
            <person name="Lafuente M.J."/>
            <person name="Landt O."/>
            <person name="Louis E.J."/>
            <person name="Maarse A.C."/>
            <person name="Madania A."/>
            <person name="Mannhaupt G."/>
            <person name="Marck C."/>
            <person name="Martin R.P."/>
            <person name="Mewes H.-W."/>
            <person name="Michaux G."/>
            <person name="Paces V."/>
            <person name="Parle-McDermott A.G."/>
            <person name="Pearson B.M."/>
            <person name="Perrin A."/>
            <person name="Pettersson B."/>
            <person name="Poch O."/>
            <person name="Pohl T.M."/>
            <person name="Poirey R."/>
            <person name="Portetelle D."/>
            <person name="Pujol A."/>
            <person name="Purnelle B."/>
            <person name="Ramezani Rad M."/>
            <person name="Rechmann S."/>
            <person name="Schwager C."/>
            <person name="Schweizer M."/>
            <person name="Sor F."/>
            <person name="Sterky F."/>
            <person name="Tarassov I.A."/>
            <person name="Teodoru C."/>
            <person name="Tettelin H."/>
            <person name="Thierry A."/>
            <person name="Tobiasch E."/>
            <person name="Tzermia M."/>
            <person name="Uhlen M."/>
            <person name="Unseld M."/>
            <person name="Valens M."/>
            <person name="Vandenbol M."/>
            <person name="Vetter I."/>
            <person name="Vlcek C."/>
            <person name="Voet M."/>
            <person name="Volckaert G."/>
            <person name="Voss H."/>
            <person name="Wambutt R."/>
            <person name="Wedler H."/>
            <person name="Wiemann S."/>
            <person name="Winsor B."/>
            <person name="Wolfe K.H."/>
            <person name="Zollner A."/>
            <person name="Zumstein E."/>
            <person name="Kleine K."/>
        </authorList>
    </citation>
    <scope>NUCLEOTIDE SEQUENCE [LARGE SCALE GENOMIC DNA]</scope>
    <source>
        <strain>ATCC 204508 / S288c</strain>
    </source>
</reference>
<reference key="3">
    <citation type="journal article" date="2014" name="G3 (Bethesda)">
        <title>The reference genome sequence of Saccharomyces cerevisiae: Then and now.</title>
        <authorList>
            <person name="Engel S.R."/>
            <person name="Dietrich F.S."/>
            <person name="Fisk D.G."/>
            <person name="Binkley G."/>
            <person name="Balakrishnan R."/>
            <person name="Costanzo M.C."/>
            <person name="Dwight S.S."/>
            <person name="Hitz B.C."/>
            <person name="Karra K."/>
            <person name="Nash R.S."/>
            <person name="Weng S."/>
            <person name="Wong E.D."/>
            <person name="Lloyd P."/>
            <person name="Skrzypek M.S."/>
            <person name="Miyasato S.R."/>
            <person name="Simison M."/>
            <person name="Cherry J.M."/>
        </authorList>
    </citation>
    <scope>GENOME REANNOTATION</scope>
    <source>
        <strain>ATCC 204508 / S288c</strain>
    </source>
</reference>
<reference key="4">
    <citation type="journal article" date="2003" name="Nature">
        <title>Global analysis of protein localization in budding yeast.</title>
        <authorList>
            <person name="Huh W.-K."/>
            <person name="Falvo J.V."/>
            <person name="Gerke L.C."/>
            <person name="Carroll A.S."/>
            <person name="Howson R.W."/>
            <person name="Weissman J.S."/>
            <person name="O'Shea E.K."/>
        </authorList>
    </citation>
    <scope>SUBCELLULAR LOCATION [LARGE SCALE ANALYSIS]</scope>
</reference>
<reference key="5">
    <citation type="journal article" date="2005" name="Gene">
        <title>Enhancement of superficial pseudohyphal growth by overexpression of the SFG1 gene in yeast Saccharomyces cerevisiae.</title>
        <authorList>
            <person name="Fujita A."/>
            <person name="Hiroko T."/>
            <person name="Hiroko F."/>
            <person name="Oka C."/>
        </authorList>
    </citation>
    <scope>FUNCTION</scope>
    <scope>SUBCELLULAR LOCATION</scope>
</reference>
<gene>
    <name type="primary">SFG1</name>
    <name type="ordered locus">YOR315W</name>
    <name type="ORF">O6128</name>
</gene>
<sequence length="346" mass="39021">MDEMHSSDTLLLRTPKSKKKIGLVIPSTPSKKCKYSSGFIAEDTTPSKRFRLYQAKFKTSSKNVKAQTLSVSIKKNQGEITNPFMTEGYNDYRNIVSPGLSFDNDCFSEHELVSPLSDISSINSTSPDVEKIDSLDPFGVDSFVWNCKPLVNKEALELHRMIHSSFPMSPLESNSDVPLLLPKLKKRLSPVNRSTFKPTRYEPSHRLLKPKKSILTVPAKSLNLIVSSSRGSLNDATIFATEINSTLSNEENKLPAISSIWEKLTIPVNSSIKEKYKKLKDQIYGQASNFGEDEDNEEDNEDDLPDAAVIRGYEFQSGRRDELTQCNELQSTKDYKKVQWAKVLEQ</sequence>
<proteinExistence type="evidence at protein level"/>